<proteinExistence type="inferred from homology"/>
<reference key="1">
    <citation type="journal article" date="2002" name="Proc. Natl. Acad. Sci. U.S.A.">
        <title>The Brucella suis genome reveals fundamental similarities between animal and plant pathogens and symbionts.</title>
        <authorList>
            <person name="Paulsen I.T."/>
            <person name="Seshadri R."/>
            <person name="Nelson K.E."/>
            <person name="Eisen J.A."/>
            <person name="Heidelberg J.F."/>
            <person name="Read T.D."/>
            <person name="Dodson R.J."/>
            <person name="Umayam L.A."/>
            <person name="Brinkac L.M."/>
            <person name="Beanan M.J."/>
            <person name="Daugherty S.C."/>
            <person name="DeBoy R.T."/>
            <person name="Durkin A.S."/>
            <person name="Kolonay J.F."/>
            <person name="Madupu R."/>
            <person name="Nelson W.C."/>
            <person name="Ayodeji B."/>
            <person name="Kraul M."/>
            <person name="Shetty J."/>
            <person name="Malek J.A."/>
            <person name="Van Aken S.E."/>
            <person name="Riedmuller S."/>
            <person name="Tettelin H."/>
            <person name="Gill S.R."/>
            <person name="White O."/>
            <person name="Salzberg S.L."/>
            <person name="Hoover D.L."/>
            <person name="Lindler L.E."/>
            <person name="Halling S.M."/>
            <person name="Boyle S.M."/>
            <person name="Fraser C.M."/>
        </authorList>
    </citation>
    <scope>NUCLEOTIDE SEQUENCE [LARGE SCALE GENOMIC DNA]</scope>
    <source>
        <strain>1330</strain>
    </source>
</reference>
<reference key="2">
    <citation type="journal article" date="2011" name="J. Bacteriol.">
        <title>Revised genome sequence of Brucella suis 1330.</title>
        <authorList>
            <person name="Tae H."/>
            <person name="Shallom S."/>
            <person name="Settlage R."/>
            <person name="Preston D."/>
            <person name="Adams L.G."/>
            <person name="Garner H.R."/>
        </authorList>
    </citation>
    <scope>NUCLEOTIDE SEQUENCE [LARGE SCALE GENOMIC DNA]</scope>
    <source>
        <strain>1330</strain>
    </source>
</reference>
<evidence type="ECO:0000255" key="1">
    <source>
        <dbReference type="HAMAP-Rule" id="MF_00532"/>
    </source>
</evidence>
<evidence type="ECO:0000305" key="2"/>
<comment type="similarity">
    <text evidence="1">Belongs to the universal ribosomal protein uS9 family.</text>
</comment>
<dbReference type="EMBL" id="AE014291">
    <property type="protein sequence ID" value="AAN29719.1"/>
    <property type="molecule type" value="Genomic_DNA"/>
</dbReference>
<dbReference type="EMBL" id="CP002997">
    <property type="protein sequence ID" value="AEM18136.1"/>
    <property type="molecule type" value="Genomic_DNA"/>
</dbReference>
<dbReference type="RefSeq" id="WP_002963925.1">
    <property type="nucleotide sequence ID" value="NZ_KN046804.1"/>
</dbReference>
<dbReference type="SMR" id="Q8G1C9"/>
<dbReference type="GeneID" id="97533901"/>
<dbReference type="KEGG" id="bms:BR0790"/>
<dbReference type="KEGG" id="bsi:BS1330_I0786"/>
<dbReference type="PATRIC" id="fig|204722.21.peg.1612"/>
<dbReference type="HOGENOM" id="CLU_046483_2_0_5"/>
<dbReference type="PhylomeDB" id="Q8G1C9"/>
<dbReference type="Proteomes" id="UP000007104">
    <property type="component" value="Chromosome I"/>
</dbReference>
<dbReference type="GO" id="GO:0022627">
    <property type="term" value="C:cytosolic small ribosomal subunit"/>
    <property type="evidence" value="ECO:0007669"/>
    <property type="project" value="TreeGrafter"/>
</dbReference>
<dbReference type="GO" id="GO:0003723">
    <property type="term" value="F:RNA binding"/>
    <property type="evidence" value="ECO:0007669"/>
    <property type="project" value="TreeGrafter"/>
</dbReference>
<dbReference type="GO" id="GO:0003735">
    <property type="term" value="F:structural constituent of ribosome"/>
    <property type="evidence" value="ECO:0007669"/>
    <property type="project" value="InterPro"/>
</dbReference>
<dbReference type="GO" id="GO:0006412">
    <property type="term" value="P:translation"/>
    <property type="evidence" value="ECO:0007669"/>
    <property type="project" value="UniProtKB-UniRule"/>
</dbReference>
<dbReference type="FunFam" id="3.30.230.10:FF:000034">
    <property type="entry name" value="30S ribosomal protein S9"/>
    <property type="match status" value="1"/>
</dbReference>
<dbReference type="Gene3D" id="3.30.230.10">
    <property type="match status" value="1"/>
</dbReference>
<dbReference type="HAMAP" id="MF_00532_B">
    <property type="entry name" value="Ribosomal_uS9_B"/>
    <property type="match status" value="1"/>
</dbReference>
<dbReference type="InterPro" id="IPR020568">
    <property type="entry name" value="Ribosomal_Su5_D2-typ_SF"/>
</dbReference>
<dbReference type="InterPro" id="IPR000754">
    <property type="entry name" value="Ribosomal_uS9"/>
</dbReference>
<dbReference type="InterPro" id="IPR023035">
    <property type="entry name" value="Ribosomal_uS9_bac/plastid"/>
</dbReference>
<dbReference type="InterPro" id="IPR020574">
    <property type="entry name" value="Ribosomal_uS9_CS"/>
</dbReference>
<dbReference type="InterPro" id="IPR014721">
    <property type="entry name" value="Ribsml_uS5_D2-typ_fold_subgr"/>
</dbReference>
<dbReference type="NCBIfam" id="NF001099">
    <property type="entry name" value="PRK00132.1"/>
    <property type="match status" value="1"/>
</dbReference>
<dbReference type="PANTHER" id="PTHR21569">
    <property type="entry name" value="RIBOSOMAL PROTEIN S9"/>
    <property type="match status" value="1"/>
</dbReference>
<dbReference type="PANTHER" id="PTHR21569:SF1">
    <property type="entry name" value="SMALL RIBOSOMAL SUBUNIT PROTEIN US9M"/>
    <property type="match status" value="1"/>
</dbReference>
<dbReference type="Pfam" id="PF00380">
    <property type="entry name" value="Ribosomal_S9"/>
    <property type="match status" value="1"/>
</dbReference>
<dbReference type="SUPFAM" id="SSF54211">
    <property type="entry name" value="Ribosomal protein S5 domain 2-like"/>
    <property type="match status" value="1"/>
</dbReference>
<dbReference type="PROSITE" id="PS00360">
    <property type="entry name" value="RIBOSOMAL_S9"/>
    <property type="match status" value="1"/>
</dbReference>
<organism>
    <name type="scientific">Brucella suis biovar 1 (strain 1330)</name>
    <dbReference type="NCBI Taxonomy" id="204722"/>
    <lineage>
        <taxon>Bacteria</taxon>
        <taxon>Pseudomonadati</taxon>
        <taxon>Pseudomonadota</taxon>
        <taxon>Alphaproteobacteria</taxon>
        <taxon>Hyphomicrobiales</taxon>
        <taxon>Brucellaceae</taxon>
        <taxon>Brucella/Ochrobactrum group</taxon>
        <taxon>Brucella</taxon>
    </lineage>
</organism>
<keyword id="KW-0687">Ribonucleoprotein</keyword>
<keyword id="KW-0689">Ribosomal protein</keyword>
<accession>Q8G1C9</accession>
<accession>G0K8T8</accession>
<sequence length="158" mass="17221">MAESINSLEELGTVAKTEAAAPVHVQKLDAQGRAYATGKRKDAVARVWVKPGTGKITVNDKEFEKYFARPVLQMILQQPIVASNRAGQFDIVATVAGGGLSGQAGAVRHGISKALTYYEPGLRTVLKKGGFLTRDSRVVERKKYGKAKARRSFQFSKR</sequence>
<name>RS9_BRUSU</name>
<feature type="chain" id="PRO_0000111334" description="Small ribosomal subunit protein uS9">
    <location>
        <begin position="1"/>
        <end position="158"/>
    </location>
</feature>
<gene>
    <name evidence="1" type="primary">rpsI</name>
    <name type="ordered locus">BR0790</name>
    <name type="ordered locus">BS1330_I0786</name>
</gene>
<protein>
    <recommendedName>
        <fullName evidence="1">Small ribosomal subunit protein uS9</fullName>
    </recommendedName>
    <alternativeName>
        <fullName evidence="2">30S ribosomal protein S9</fullName>
    </alternativeName>
</protein>